<name>SAT_CHLSY</name>
<comment type="catalytic activity">
    <reaction evidence="1">
        <text>sulfate + ATP + H(+) = adenosine 5'-phosphosulfate + diphosphate</text>
        <dbReference type="Rhea" id="RHEA:18133"/>
        <dbReference type="ChEBI" id="CHEBI:15378"/>
        <dbReference type="ChEBI" id="CHEBI:16189"/>
        <dbReference type="ChEBI" id="CHEBI:30616"/>
        <dbReference type="ChEBI" id="CHEBI:33019"/>
        <dbReference type="ChEBI" id="CHEBI:58243"/>
        <dbReference type="EC" id="2.7.7.4"/>
    </reaction>
</comment>
<comment type="pathway">
    <text evidence="1">Sulfur metabolism; hydrogen sulfide biosynthesis; sulfite from sulfate: step 1/3.</text>
</comment>
<comment type="similarity">
    <text evidence="1">Belongs to the sulfate adenylyltransferase family.</text>
</comment>
<gene>
    <name evidence="1" type="primary">sat</name>
    <name type="ordered locus">Chy400_0746</name>
</gene>
<proteinExistence type="inferred from homology"/>
<protein>
    <recommendedName>
        <fullName evidence="1">Sulfate adenylyltransferase</fullName>
        <ecNumber evidence="1">2.7.7.4</ecNumber>
    </recommendedName>
    <alternativeName>
        <fullName evidence="1">ATP-sulfurylase</fullName>
    </alternativeName>
    <alternativeName>
        <fullName evidence="1">Sulfate adenylate transferase</fullName>
        <shortName evidence="1">SAT</shortName>
    </alternativeName>
</protein>
<organism>
    <name type="scientific">Chloroflexus aurantiacus (strain ATCC 29364 / DSM 637 / Y-400-fl)</name>
    <dbReference type="NCBI Taxonomy" id="480224"/>
    <lineage>
        <taxon>Bacteria</taxon>
        <taxon>Bacillati</taxon>
        <taxon>Chloroflexota</taxon>
        <taxon>Chloroflexia</taxon>
        <taxon>Chloroflexales</taxon>
        <taxon>Chloroflexineae</taxon>
        <taxon>Chloroflexaceae</taxon>
        <taxon>Chloroflexus</taxon>
    </lineage>
</organism>
<sequence length="381" mass="42918">MIPQTSSLPKPHGGVLVERIRVAHPREYDHLPALELDERAYADLELIATGVYSPLEGFMGQADYLSVLEEMRLTNGLPWSIPITLGVSAQDAASYRKTVRLTKDGRTVGLLDVEEQYRPDKEHEALAVYRTTDLAHPGVAALFARGDVYLAGKVQLLTLDRGPFPEHHYTPRETRQLFQERGWQTIVAFQTRNPIHRAHEYLHKVALESLDGLFLHPLVGSTKSDDVPAPVRMAAYKVLLERYYPQNRVLLGVYPAAMRYAGPREAILHAISRKNYGCTHFIVGRDHAGVGNYYGPYEAQAIFDHFRPEEIGIHILKFEQTFYCVTCAAVVSPRTCPHDTQHHLVLSGTRVRELLRAGSPLPPEFTRPEVAEVLRAAYQTL</sequence>
<dbReference type="EC" id="2.7.7.4" evidence="1"/>
<dbReference type="EMBL" id="CP001364">
    <property type="protein sequence ID" value="ACM52176.1"/>
    <property type="molecule type" value="Genomic_DNA"/>
</dbReference>
<dbReference type="SMR" id="B9LKB9"/>
<dbReference type="KEGG" id="chl:Chy400_0746"/>
<dbReference type="HOGENOM" id="CLU_022950_1_1_0"/>
<dbReference type="OrthoDB" id="9804504at2"/>
<dbReference type="UniPathway" id="UPA00140">
    <property type="reaction ID" value="UER00204"/>
</dbReference>
<dbReference type="GO" id="GO:0005524">
    <property type="term" value="F:ATP binding"/>
    <property type="evidence" value="ECO:0007669"/>
    <property type="project" value="UniProtKB-KW"/>
</dbReference>
<dbReference type="GO" id="GO:0004781">
    <property type="term" value="F:sulfate adenylyltransferase (ATP) activity"/>
    <property type="evidence" value="ECO:0007669"/>
    <property type="project" value="UniProtKB-UniRule"/>
</dbReference>
<dbReference type="GO" id="GO:0070814">
    <property type="term" value="P:hydrogen sulfide biosynthetic process"/>
    <property type="evidence" value="ECO:0007669"/>
    <property type="project" value="UniProtKB-UniRule"/>
</dbReference>
<dbReference type="GO" id="GO:0000103">
    <property type="term" value="P:sulfate assimilation"/>
    <property type="evidence" value="ECO:0007669"/>
    <property type="project" value="UniProtKB-UniRule"/>
</dbReference>
<dbReference type="CDD" id="cd00517">
    <property type="entry name" value="ATPS"/>
    <property type="match status" value="1"/>
</dbReference>
<dbReference type="Gene3D" id="3.40.50.620">
    <property type="entry name" value="HUPs"/>
    <property type="match status" value="1"/>
</dbReference>
<dbReference type="Gene3D" id="3.10.400.10">
    <property type="entry name" value="Sulfate adenylyltransferase"/>
    <property type="match status" value="1"/>
</dbReference>
<dbReference type="HAMAP" id="MF_00066">
    <property type="entry name" value="Sulf_adenylyltr"/>
    <property type="match status" value="1"/>
</dbReference>
<dbReference type="InterPro" id="IPR025980">
    <property type="entry name" value="ATP-Sase_PUA-like_dom"/>
</dbReference>
<dbReference type="InterPro" id="IPR015947">
    <property type="entry name" value="PUA-like_sf"/>
</dbReference>
<dbReference type="InterPro" id="IPR014729">
    <property type="entry name" value="Rossmann-like_a/b/a_fold"/>
</dbReference>
<dbReference type="InterPro" id="IPR020792">
    <property type="entry name" value="SO4_adenylyltransferase_pro"/>
</dbReference>
<dbReference type="InterPro" id="IPR024951">
    <property type="entry name" value="Sulfurylase_cat_dom"/>
</dbReference>
<dbReference type="InterPro" id="IPR002650">
    <property type="entry name" value="Sulphate_adenylyltransferase"/>
</dbReference>
<dbReference type="NCBIfam" id="NF003166">
    <property type="entry name" value="PRK04149.1"/>
    <property type="match status" value="1"/>
</dbReference>
<dbReference type="NCBIfam" id="TIGR00339">
    <property type="entry name" value="sopT"/>
    <property type="match status" value="1"/>
</dbReference>
<dbReference type="PANTHER" id="PTHR43509">
    <property type="match status" value="1"/>
</dbReference>
<dbReference type="PANTHER" id="PTHR43509:SF1">
    <property type="entry name" value="SULFATE ADENYLYLTRANSFERASE"/>
    <property type="match status" value="1"/>
</dbReference>
<dbReference type="Pfam" id="PF01747">
    <property type="entry name" value="ATP-sulfurylase"/>
    <property type="match status" value="1"/>
</dbReference>
<dbReference type="Pfam" id="PF14306">
    <property type="entry name" value="PUA_2"/>
    <property type="match status" value="1"/>
</dbReference>
<dbReference type="SUPFAM" id="SSF52374">
    <property type="entry name" value="Nucleotidylyl transferase"/>
    <property type="match status" value="1"/>
</dbReference>
<dbReference type="SUPFAM" id="SSF88697">
    <property type="entry name" value="PUA domain-like"/>
    <property type="match status" value="1"/>
</dbReference>
<keyword id="KW-0067">ATP-binding</keyword>
<keyword id="KW-0547">Nucleotide-binding</keyword>
<keyword id="KW-0548">Nucleotidyltransferase</keyword>
<keyword id="KW-0808">Transferase</keyword>
<feature type="chain" id="PRO_1000117964" description="Sulfate adenylyltransferase">
    <location>
        <begin position="1"/>
        <end position="381"/>
    </location>
</feature>
<accession>B9LKB9</accession>
<reference key="1">
    <citation type="submission" date="2009-01" db="EMBL/GenBank/DDBJ databases">
        <title>Complete sequence of Chloroflexus sp. Y-400-fl.</title>
        <authorList>
            <consortium name="US DOE Joint Genome Institute"/>
            <person name="Lucas S."/>
            <person name="Copeland A."/>
            <person name="Lapidus A."/>
            <person name="Glavina del Rio T."/>
            <person name="Dalin E."/>
            <person name="Tice H."/>
            <person name="Bruce D."/>
            <person name="Goodwin L."/>
            <person name="Pitluck S."/>
            <person name="Sims D."/>
            <person name="Kiss H."/>
            <person name="Brettin T."/>
            <person name="Detter J.C."/>
            <person name="Han C."/>
            <person name="Larimer F."/>
            <person name="Land M."/>
            <person name="Hauser L."/>
            <person name="Kyrpides N."/>
            <person name="Ovchinnikova G."/>
            <person name="Bryant D.A."/>
            <person name="Richardson P."/>
        </authorList>
    </citation>
    <scope>NUCLEOTIDE SEQUENCE [LARGE SCALE GENOMIC DNA]</scope>
    <source>
        <strain>ATCC 29364 / DSM 637 / Y-400-fl</strain>
    </source>
</reference>
<evidence type="ECO:0000255" key="1">
    <source>
        <dbReference type="HAMAP-Rule" id="MF_00066"/>
    </source>
</evidence>